<reference key="1">
    <citation type="journal article" date="2001" name="Nature">
        <title>Complete genome sequence of Salmonella enterica serovar Typhimurium LT2.</title>
        <authorList>
            <person name="McClelland M."/>
            <person name="Sanderson K.E."/>
            <person name="Spieth J."/>
            <person name="Clifton S.W."/>
            <person name="Latreille P."/>
            <person name="Courtney L."/>
            <person name="Porwollik S."/>
            <person name="Ali J."/>
            <person name="Dante M."/>
            <person name="Du F."/>
            <person name="Hou S."/>
            <person name="Layman D."/>
            <person name="Leonard S."/>
            <person name="Nguyen C."/>
            <person name="Scott K."/>
            <person name="Holmes A."/>
            <person name="Grewal N."/>
            <person name="Mulvaney E."/>
            <person name="Ryan E."/>
            <person name="Sun H."/>
            <person name="Florea L."/>
            <person name="Miller W."/>
            <person name="Stoneking T."/>
            <person name="Nhan M."/>
            <person name="Waterston R."/>
            <person name="Wilson R.K."/>
        </authorList>
    </citation>
    <scope>NUCLEOTIDE SEQUENCE [LARGE SCALE GENOMIC DNA]</scope>
    <source>
        <strain>LT2 / SGSC1412 / ATCC 700720</strain>
    </source>
</reference>
<dbReference type="EMBL" id="AE006468">
    <property type="protein sequence ID" value="AAL19057.1"/>
    <property type="molecule type" value="Genomic_DNA"/>
</dbReference>
<dbReference type="RefSeq" id="NP_459098.1">
    <property type="nucleotide sequence ID" value="NC_003197.2"/>
</dbReference>
<dbReference type="RefSeq" id="WP_000746127.1">
    <property type="nucleotide sequence ID" value="NC_003197.2"/>
</dbReference>
<dbReference type="PDB" id="4N4R">
    <property type="method" value="X-ray"/>
    <property type="resolution" value="2.80 A"/>
    <property type="chains" value="A/C=1-786"/>
</dbReference>
<dbReference type="PDBsum" id="4N4R"/>
<dbReference type="SMR" id="Q8ZRW0"/>
<dbReference type="DIP" id="DIP-61032N"/>
<dbReference type="IntAct" id="Q8ZRW0">
    <property type="interactions" value="1"/>
</dbReference>
<dbReference type="STRING" id="99287.STM0093"/>
<dbReference type="PaxDb" id="99287-STM0093"/>
<dbReference type="GeneID" id="1251611"/>
<dbReference type="KEGG" id="stm:STM0093"/>
<dbReference type="PATRIC" id="fig|99287.12.peg.96"/>
<dbReference type="HOGENOM" id="CLU_009039_2_0_6"/>
<dbReference type="PhylomeDB" id="Q8ZRW0"/>
<dbReference type="BioCyc" id="MetaCyc:STM0093-MONOMER"/>
<dbReference type="BioCyc" id="SENT99287:STM0093-MONOMER"/>
<dbReference type="EvolutionaryTrace" id="Q8ZRW0"/>
<dbReference type="Proteomes" id="UP000001014">
    <property type="component" value="Chromosome"/>
</dbReference>
<dbReference type="GO" id="GO:0009279">
    <property type="term" value="C:cell outer membrane"/>
    <property type="evidence" value="ECO:0000318"/>
    <property type="project" value="GO_Central"/>
</dbReference>
<dbReference type="GO" id="GO:1990351">
    <property type="term" value="C:transporter complex"/>
    <property type="evidence" value="ECO:0000318"/>
    <property type="project" value="GO_Central"/>
</dbReference>
<dbReference type="GO" id="GO:0043165">
    <property type="term" value="P:Gram-negative-bacterium-type cell outer membrane assembly"/>
    <property type="evidence" value="ECO:0007669"/>
    <property type="project" value="UniProtKB-UniRule"/>
</dbReference>
<dbReference type="GO" id="GO:0015920">
    <property type="term" value="P:lipopolysaccharide transport"/>
    <property type="evidence" value="ECO:0007669"/>
    <property type="project" value="InterPro"/>
</dbReference>
<dbReference type="DisProt" id="DP02518"/>
<dbReference type="FunFam" id="2.60.450.10:FF:000003">
    <property type="entry name" value="LPS-assembly protein LptD"/>
    <property type="match status" value="1"/>
</dbReference>
<dbReference type="Gene3D" id="2.60.450.10">
    <property type="entry name" value="Lipopolysaccharide (LPS) transport protein A like domain"/>
    <property type="match status" value="1"/>
</dbReference>
<dbReference type="HAMAP" id="MF_01411">
    <property type="entry name" value="LPS_assembly_LptD"/>
    <property type="match status" value="1"/>
</dbReference>
<dbReference type="InterPro" id="IPR020889">
    <property type="entry name" value="LipoPS_assembly_LptD"/>
</dbReference>
<dbReference type="InterPro" id="IPR050218">
    <property type="entry name" value="LptD"/>
</dbReference>
<dbReference type="InterPro" id="IPR007543">
    <property type="entry name" value="LptD_C"/>
</dbReference>
<dbReference type="InterPro" id="IPR005653">
    <property type="entry name" value="OstA-like_N"/>
</dbReference>
<dbReference type="NCBIfam" id="NF002997">
    <property type="entry name" value="PRK03761.1"/>
    <property type="match status" value="1"/>
</dbReference>
<dbReference type="PANTHER" id="PTHR30189">
    <property type="entry name" value="LPS-ASSEMBLY PROTEIN"/>
    <property type="match status" value="1"/>
</dbReference>
<dbReference type="PANTHER" id="PTHR30189:SF1">
    <property type="entry name" value="LPS-ASSEMBLY PROTEIN LPTD"/>
    <property type="match status" value="1"/>
</dbReference>
<dbReference type="Pfam" id="PF04453">
    <property type="entry name" value="LptD"/>
    <property type="match status" value="1"/>
</dbReference>
<dbReference type="Pfam" id="PF03968">
    <property type="entry name" value="LptD_N"/>
    <property type="match status" value="1"/>
</dbReference>
<sequence>MKKRIPTLLATMIASALYSHQGLAADLASQCMLGVPSYDRPLVKGDTNDLPVTINADNAKGNYPDDAVFTGNVDIMQGNSRLQADEVQLHQKQAEGQPEPVRTVDALGNVHYDDNQVILKGPKGWANLNTKDTNVWEGDYQMVGRQGRGKADLMKQRGENRYTILENGSFTSCLPGSDTWSVVGSEVIHDREEQVAEIWNARFKVGPVPIFYSPYLQLPVGDKRRSGFLIPNAKYTTKNYFEFYLPYYWNIAPNMDATITPHYMHRRGNIMWENEFRYLTQAGEGVMELDYLPSDKVYEDDHPKEGDKHRWLFYWQHSGVMDQVWRFNVDYTKVSDSSYFNDFDSKYGSSTDGYATQKFSVGYAVQNFDATVSTKQFQVFNDQNTSSYSAEPQLDVNYYHNDLGPFDTRIYGQAVHFVNTKDNMPEATRVHLEPTINLPLSNRWGSLNTEAKLMATHYQQTNLDSYNSDPNNKNKLEDSVNRVMPQFKVDGKLIFERDMAMLAPGYTQTLEPRVQYLYVPYRDQSGIYNYDSSLLQSDYNGLFRDRTYGGLDRIASANQVTTGVTTRIYDDAAVERFNVSVGQIYYFTESRTGDDNIKWENDDKTGSLVWAGDTYWRISERWGLRSGVQYDTRLDSVATSSSSLEYRRDQDRLVQLNYRYASPEYIQATLPSYYSTAEQYKNGINQVGAVASWPIADRWSIVGAYYFDTNSSKPADQMLGLQYNSCCYAIRVGYERKLNGWDNDKQHAIYDNAIGFNIELRGLSSNYGLGTQEMLRSNILPYQSSM</sequence>
<accession>Q8ZRW0</accession>
<keyword id="KW-0002">3D-structure</keyword>
<keyword id="KW-0998">Cell outer membrane</keyword>
<keyword id="KW-1015">Disulfide bond</keyword>
<keyword id="KW-0472">Membrane</keyword>
<keyword id="KW-1185">Reference proteome</keyword>
<keyword id="KW-0732">Signal</keyword>
<name>LPTD_SALTY</name>
<organism>
    <name type="scientific">Salmonella typhimurium (strain LT2 / SGSC1412 / ATCC 700720)</name>
    <dbReference type="NCBI Taxonomy" id="99287"/>
    <lineage>
        <taxon>Bacteria</taxon>
        <taxon>Pseudomonadati</taxon>
        <taxon>Pseudomonadota</taxon>
        <taxon>Gammaproteobacteria</taxon>
        <taxon>Enterobacterales</taxon>
        <taxon>Enterobacteriaceae</taxon>
        <taxon>Salmonella</taxon>
    </lineage>
</organism>
<gene>
    <name evidence="1" type="primary">lptD</name>
    <name type="synonym">imp</name>
    <name type="synonym">ostA</name>
    <name type="ordered locus">STM0093</name>
</gene>
<comment type="function">
    <text evidence="1">Together with LptE, is involved in the assembly of lipopolysaccharide (LPS) at the surface of the outer membrane.</text>
</comment>
<comment type="subunit">
    <text evidence="1">Component of the lipopolysaccharide transport and assembly complex. Interacts with LptE and LptA.</text>
</comment>
<comment type="interaction">
    <interactant intactId="EBI-16111554">
        <id>Q8ZRW0</id>
    </interactant>
    <interactant intactId="EBI-16111540">
        <id>Q8ZQZ7</id>
        <label>lptE</label>
    </interactant>
    <organismsDiffer>false</organismsDiffer>
    <experiments>3</experiments>
</comment>
<comment type="subcellular location">
    <subcellularLocation>
        <location evidence="1">Cell outer membrane</location>
    </subcellularLocation>
</comment>
<comment type="PTM">
    <text evidence="1">Contains two intramolecular disulfide bonds.</text>
</comment>
<comment type="similarity">
    <text evidence="1">Belongs to the LptD family.</text>
</comment>
<evidence type="ECO:0000255" key="1">
    <source>
        <dbReference type="HAMAP-Rule" id="MF_01411"/>
    </source>
</evidence>
<evidence type="ECO:0007829" key="2">
    <source>
        <dbReference type="PDB" id="4N4R"/>
    </source>
</evidence>
<feature type="signal peptide" evidence="1">
    <location>
        <begin position="1"/>
        <end position="24"/>
    </location>
</feature>
<feature type="chain" id="PRO_0000020289" description="LPS-assembly protein LptD">
    <location>
        <begin position="25"/>
        <end position="786"/>
    </location>
</feature>
<feature type="disulfide bond" evidence="1">
    <location>
        <begin position="31"/>
        <end position="726"/>
    </location>
</feature>
<feature type="disulfide bond" evidence="1">
    <location>
        <begin position="173"/>
        <end position="727"/>
    </location>
</feature>
<feature type="strand" evidence="2">
    <location>
        <begin position="232"/>
        <end position="236"/>
    </location>
</feature>
<feature type="turn" evidence="2">
    <location>
        <begin position="237"/>
        <end position="239"/>
    </location>
</feature>
<feature type="strand" evidence="2">
    <location>
        <begin position="240"/>
        <end position="244"/>
    </location>
</feature>
<feature type="strand" evidence="2">
    <location>
        <begin position="247"/>
        <end position="249"/>
    </location>
</feature>
<feature type="strand" evidence="2">
    <location>
        <begin position="252"/>
        <end position="254"/>
    </location>
</feature>
<feature type="strand" evidence="2">
    <location>
        <begin position="256"/>
        <end position="264"/>
    </location>
</feature>
<feature type="turn" evidence="2">
    <location>
        <begin position="265"/>
        <end position="268"/>
    </location>
</feature>
<feature type="strand" evidence="2">
    <location>
        <begin position="269"/>
        <end position="280"/>
    </location>
</feature>
<feature type="strand" evidence="2">
    <location>
        <begin position="283"/>
        <end position="289"/>
    </location>
</feature>
<feature type="strand" evidence="2">
    <location>
        <begin position="312"/>
        <end position="321"/>
    </location>
</feature>
<feature type="turn" evidence="2">
    <location>
        <begin position="322"/>
        <end position="324"/>
    </location>
</feature>
<feature type="strand" evidence="2">
    <location>
        <begin position="325"/>
        <end position="336"/>
    </location>
</feature>
<feature type="helix" evidence="2">
    <location>
        <begin position="339"/>
        <end position="342"/>
    </location>
</feature>
<feature type="strand" evidence="2">
    <location>
        <begin position="356"/>
        <end position="365"/>
    </location>
</feature>
<feature type="strand" evidence="2">
    <location>
        <begin position="368"/>
        <end position="377"/>
    </location>
</feature>
<feature type="strand" evidence="2">
    <location>
        <begin position="388"/>
        <end position="400"/>
    </location>
</feature>
<feature type="strand" evidence="2">
    <location>
        <begin position="403"/>
        <end position="405"/>
    </location>
</feature>
<feature type="strand" evidence="2">
    <location>
        <begin position="407"/>
        <end position="424"/>
    </location>
</feature>
<feature type="strand" evidence="2">
    <location>
        <begin position="426"/>
        <end position="442"/>
    </location>
</feature>
<feature type="strand" evidence="2">
    <location>
        <begin position="445"/>
        <end position="457"/>
    </location>
</feature>
<feature type="helix" evidence="2">
    <location>
        <begin position="464"/>
        <end position="467"/>
    </location>
</feature>
<feature type="strand" evidence="2">
    <location>
        <begin position="469"/>
        <end position="471"/>
    </location>
</feature>
<feature type="strand" evidence="2">
    <location>
        <begin position="481"/>
        <end position="493"/>
    </location>
</feature>
<feature type="strand" evidence="2">
    <location>
        <begin position="495"/>
        <end position="497"/>
    </location>
</feature>
<feature type="turn" evidence="2">
    <location>
        <begin position="500"/>
        <end position="502"/>
    </location>
</feature>
<feature type="strand" evidence="2">
    <location>
        <begin position="507"/>
        <end position="519"/>
    </location>
</feature>
<feature type="strand" evidence="2">
    <location>
        <begin position="525"/>
        <end position="527"/>
    </location>
</feature>
<feature type="helix" evidence="2">
    <location>
        <begin position="540"/>
        <end position="543"/>
    </location>
</feature>
<feature type="strand" evidence="2">
    <location>
        <begin position="547"/>
        <end position="552"/>
    </location>
</feature>
<feature type="strand" evidence="2">
    <location>
        <begin position="557"/>
        <end position="569"/>
    </location>
</feature>
<feature type="strand" evidence="2">
    <location>
        <begin position="575"/>
        <end position="588"/>
    </location>
</feature>
<feature type="strand" evidence="2">
    <location>
        <begin position="605"/>
        <end position="616"/>
    </location>
</feature>
<feature type="strand" evidence="2">
    <location>
        <begin position="619"/>
        <end position="631"/>
    </location>
</feature>
<feature type="strand" evidence="2">
    <location>
        <begin position="634"/>
        <end position="649"/>
    </location>
</feature>
<feature type="strand" evidence="2">
    <location>
        <begin position="652"/>
        <end position="661"/>
    </location>
</feature>
<feature type="helix" evidence="2">
    <location>
        <begin position="663"/>
        <end position="669"/>
    </location>
</feature>
<feature type="helix" evidence="2">
    <location>
        <begin position="672"/>
        <end position="676"/>
    </location>
</feature>
<feature type="turn" evidence="2">
    <location>
        <begin position="678"/>
        <end position="682"/>
    </location>
</feature>
<feature type="strand" evidence="2">
    <location>
        <begin position="684"/>
        <end position="693"/>
    </location>
</feature>
<feature type="strand" evidence="2">
    <location>
        <begin position="696"/>
        <end position="698"/>
    </location>
</feature>
<feature type="strand" evidence="2">
    <location>
        <begin position="700"/>
        <end position="708"/>
    </location>
</feature>
<feature type="turn" evidence="2">
    <location>
        <begin position="709"/>
        <end position="712"/>
    </location>
</feature>
<feature type="strand" evidence="2">
    <location>
        <begin position="713"/>
        <end position="722"/>
    </location>
</feature>
<feature type="strand" evidence="2">
    <location>
        <begin position="731"/>
        <end position="742"/>
    </location>
</feature>
<feature type="turn" evidence="2">
    <location>
        <begin position="743"/>
        <end position="746"/>
    </location>
</feature>
<feature type="strand" evidence="2">
    <location>
        <begin position="747"/>
        <end position="751"/>
    </location>
</feature>
<feature type="strand" evidence="2">
    <location>
        <begin position="754"/>
        <end position="757"/>
    </location>
</feature>
<feature type="helix" evidence="2">
    <location>
        <begin position="772"/>
        <end position="775"/>
    </location>
</feature>
<feature type="strand" evidence="2">
    <location>
        <begin position="778"/>
        <end position="780"/>
    </location>
</feature>
<protein>
    <recommendedName>
        <fullName evidence="1">LPS-assembly protein LptD</fullName>
    </recommendedName>
</protein>
<proteinExistence type="evidence at protein level"/>